<keyword id="KW-0012">Acyltransferase</keyword>
<keyword id="KW-0511">Multifunctional enzyme</keyword>
<keyword id="KW-0521">NADP</keyword>
<keyword id="KW-0560">Oxidoreductase</keyword>
<keyword id="KW-0596">Phosphopantetheine</keyword>
<keyword id="KW-0597">Phosphoprotein</keyword>
<keyword id="KW-1185">Reference proteome</keyword>
<keyword id="KW-0808">Transferase</keyword>
<reference key="1">
    <citation type="journal article" date="2011" name="PLoS Pathog.">
        <title>Genomic and proteomic analyses of the fungus Arthrobotrys oligospora provide insights into nematode-trap formation.</title>
        <authorList>
            <person name="Yang J."/>
            <person name="Wang L."/>
            <person name="Ji X."/>
            <person name="Feng Y."/>
            <person name="Li X."/>
            <person name="Zou C."/>
            <person name="Xu J."/>
            <person name="Ren Y."/>
            <person name="Mi Q."/>
            <person name="Wu J."/>
            <person name="Liu S."/>
            <person name="Liu Y."/>
            <person name="Huang X."/>
            <person name="Wang H."/>
            <person name="Niu X."/>
            <person name="Li J."/>
            <person name="Liang L."/>
            <person name="Luo Y."/>
            <person name="Ji K."/>
            <person name="Zhou W."/>
            <person name="Yu Z."/>
            <person name="Li G."/>
            <person name="Liu Y."/>
            <person name="Li L."/>
            <person name="Qiao M."/>
            <person name="Feng L."/>
            <person name="Zhang K.-Q."/>
        </authorList>
    </citation>
    <scope>NUCLEOTIDE SEQUENCE [LARGE SCALE GENOMIC DNA]</scope>
    <source>
        <strain>ATCC 24927 / CBS 115.81 / DSM 1491</strain>
    </source>
</reference>
<reference key="2">
    <citation type="journal article" date="2015" name="J. Agric. Food Chem.">
        <title>High trap formation and low metabolite production by disruption of the polyketide synthase gene involved in the biosynthesis of arthrosporols from nematode-trapping fungus Arthrobotrys oligospora.</title>
        <authorList>
            <person name="Xu Z.F."/>
            <person name="Wang B.L."/>
            <person name="Sun H.K."/>
            <person name="Yan N."/>
            <person name="Zeng Z.J."/>
            <person name="Zhang K.Q."/>
            <person name="Niu X.M."/>
        </authorList>
    </citation>
    <scope>FUNCTION</scope>
    <scope>DISRUPTION PHENOTYPE</scope>
    <scope>CATALYTIC ACTIVITY</scope>
    <scope>DOMAIN</scope>
    <scope>PATHWAY</scope>
</reference>
<reference key="3">
    <citation type="journal article" date="2016" name="J. Agric. Food Chem.">
        <title>Nematicidal key precursors for the biosynthesis of morphological regulatory arthrosporols in nematode-trapping fungus Arthrobotrys oligospora.</title>
        <authorList>
            <person name="Xu Z."/>
            <person name="Chen Y."/>
            <person name="Song T."/>
            <person name="Zeng Z."/>
            <person name="Yan N."/>
            <person name="Zhang K."/>
            <person name="Niu X."/>
        </authorList>
    </citation>
    <scope>FUNCTION</scope>
    <scope>DISRUPTION PHENOTYPE</scope>
</reference>
<reference key="4">
    <citation type="journal article" date="2021" name="J. Agric. Food Chem.">
        <title>Polyketide synthase-terpenoid synthase hybrid pathway regulation of trap formation through ammonia metabolism controls soil colonization of predominant nematode-trapping fungus.</title>
        <authorList>
            <person name="He Z.Q."/>
            <person name="Wang L.J."/>
            <person name="Wang Y.J."/>
            <person name="Chen Y.H."/>
            <person name="Wen Y."/>
            <person name="Zhang K.Q."/>
            <person name="Niu X.M."/>
        </authorList>
    </citation>
    <scope>FUNCTION</scope>
    <scope>DISRUPTION PHENOTYPE</scope>
    <scope>PATHWAY</scope>
</reference>
<reference key="5">
    <citation type="journal article" date="2022" name="J. Fungi">
        <title>The multifaceted gene 275 embedded in the PKS-PTS gene cluster was involved in the regulation of arthrobotrisin biosynthesis, TCA cycle, and septa formation in nematode-trapping fungus Arthrobotrys oligospora.</title>
        <authorList>
            <person name="Zhou J."/>
            <person name="Wu Q.F."/>
            <person name="Li S.H."/>
            <person name="Yan J.X."/>
            <person name="Wu L."/>
            <person name="Cheng Q.Y."/>
            <person name="He Z.Q."/>
            <person name="Yue X.T."/>
            <person name="Zhang K.Q."/>
            <person name="Zhang L.L."/>
            <person name="Niu X.M."/>
        </authorList>
    </citation>
    <scope>INDUCTION</scope>
</reference>
<reference key="6">
    <citation type="journal article" date="2025" name="J. Adv. Res.">
        <title>Identification of a transcription factor AoMsn2 of the Hog1 signaling pathway contributes to fungal growth, development and pathogenicity in Arthrobotrys oligospora.</title>
        <authorList>
            <person name="Liu Q."/>
            <person name="Jiang K."/>
            <person name="Duan S."/>
            <person name="Zhao N."/>
            <person name="Shen Y."/>
            <person name="Zhu L."/>
            <person name="Zhang K.Q."/>
            <person name="Yang J."/>
        </authorList>
    </citation>
    <scope>INDUCTION</scope>
</reference>
<comment type="function">
    <text evidence="7 8 9 15">6-methylsalicylic acid synthase; part of the gene cluster that mediates the biosynthesis of sesquiterpenyl epoxy-cyclohexenoids (SECs) such as anthrobotrisins and arthrosporols, metabolites that possess a novel hybrid carbon skeleton consisting of a polyketide-derived epoxycyclohexenol combined with a terpenoid-derived monocyclic sesquiterpenol substructure (PKS-PTS hybrid) (PubMed:26422178, PubMed:27723963, PubMed:33823587). The SEC pathway plays an important role for fungal soil colonization via decreasing fungal nematode-capturing ability (PubMed:33823587). Within the pathway, the polyketide synthase (PKS) AOL_s00215g283 catalyzes the biosynthesis of 6-methylsalicylic acid (6-MSA) via condensation of 1 acetate and 3 malonate units (PubMed:26422178, PubMed:27723963, PubMed:33823587). AOL_s00215g283 performs a series of programmed reactions including Claisen condensation, dehydration, reduction, and cyclization to yield 6-MSA (PubMed:26422178, PubMed:33823587). The pathway begins with the biosynthesis of 6-methylsalicylic acid (6-MSA), the first precursor of the polyketide-derived epoxycyclohexenol in arthrosporols, by the polyketide synthase (PKS) AOL_s00215g283. The 6-methylsalicylic acid decarboxylase AOL_s00215g281 then catalyzes the decarboxylation of 6-methylsalicylic acid to yield m-cresol. The cytochrome P450 monooxygenase AOL_s00215g282 further oxidizes m-cresol to yield toluquinol. With the assistance of the oxidoreductase AOL_s00215g277, the polyprenyl transferase AOL_s00215g276 catalyzes the farnesylation of toluquinol to produce farnesyl hydroquinone, the hybrid precursor for biosynthesis of SECs. Farnesyl hydroquinone undergoes epoxidation and then subsequent dehydrogenation to form farnesyl epoxy-quinone, the first and simplest SEC. The cytochrome P450 monooxygenase AOL_s00215g278 and the FAD-dependent monooxygenase AOL_s00215g279 might be involved in the oxygenation of the phenol moiety, most likely in the epoxy formation. The cytochrome P450 monooxygenases AOL_s00215g274 and AOL_s00215g280 are involved in specific regional ketone reductions at respectively C-4 and C-1 of farnesyl epoxy-quinone PubMed:33823587 (Probable).</text>
</comment>
<comment type="catalytic activity">
    <reaction evidence="7">
        <text>3 malonyl-CoA + acetyl-CoA + NADPH + 3 H(+) = 6-methylsalicylate + 3 CO2 + NADP(+) + 4 CoA + H2O</text>
        <dbReference type="Rhea" id="RHEA:12240"/>
        <dbReference type="ChEBI" id="CHEBI:15377"/>
        <dbReference type="ChEBI" id="CHEBI:15378"/>
        <dbReference type="ChEBI" id="CHEBI:16526"/>
        <dbReference type="ChEBI" id="CHEBI:36658"/>
        <dbReference type="ChEBI" id="CHEBI:57287"/>
        <dbReference type="ChEBI" id="CHEBI:57288"/>
        <dbReference type="ChEBI" id="CHEBI:57384"/>
        <dbReference type="ChEBI" id="CHEBI:57783"/>
        <dbReference type="ChEBI" id="CHEBI:58349"/>
        <dbReference type="EC" id="2.3.1.165"/>
    </reaction>
    <physiologicalReaction direction="left-to-right" evidence="7">
        <dbReference type="Rhea" id="RHEA:12241"/>
    </physiologicalReaction>
</comment>
<comment type="pathway">
    <text evidence="7 9">Secondary metabolite biosynthesis; terpenoid biosynthesis.</text>
</comment>
<comment type="induction">
    <text evidence="10 11">Expression is down-regulated by the cluster-specific transcription factor AOL_s00215g275 (PubMed:36547594). Expression is also down-regulated by the HOG1-MAPK pathway downstream transcription factor MSN2 (PubMed:38331317).</text>
</comment>
<comment type="disruption phenotype">
    <text evidence="7 8 9">Abolishes the production of arthrobotrisins A to D and arthrosporol A (PubMed:26422178, PubMed:27723963, PubMed:33823587). Displays significant increases in the trap formation and the nematicidal activity (PubMed:26422178). Develops far more adhesive trapping devices and traps and increases the number of captured nematodes by the traps (PubMed:33823587). Shows significantly increased ammonia levels in fungal mycelia (PubMed:33823587).</text>
</comment>
<accession>G1XU04</accession>
<protein>
    <recommendedName>
        <fullName evidence="12">6-methylsalicylic acid synthase AOL_s00215g283</fullName>
        <shortName evidence="12">6-MSAS</shortName>
        <ecNumber evidence="7">2.3.1.165</ecNumber>
    </recommendedName>
    <alternativeName>
        <fullName evidence="13">Sesquiterpenyl epoxy-cyclohexenoids cluster protein AOL_s00215g283</fullName>
        <shortName evidence="13">SECs cluster protein AOL_s00215g283</shortName>
    </alternativeName>
</protein>
<feature type="chain" id="PRO_0000445288" description="6-methylsalicylic acid synthase AOL_s00215g283">
    <location>
        <begin position="1"/>
        <end position="1761"/>
    </location>
</feature>
<feature type="domain" description="Ketosynthase family 3 (KS3)" evidence="3 14">
    <location>
        <begin position="18"/>
        <end position="443"/>
    </location>
</feature>
<feature type="domain" description="PKS/mFAS DH" evidence="4">
    <location>
        <begin position="918"/>
        <end position="1191"/>
    </location>
</feature>
<feature type="domain" description="Carrier" evidence="2 14">
    <location>
        <begin position="1686"/>
        <end position="1761"/>
    </location>
</feature>
<feature type="region of interest" description="Malonyl-CoA:ACP transacylase (MAT) domain" evidence="1 14">
    <location>
        <begin position="554"/>
        <end position="870"/>
    </location>
</feature>
<feature type="region of interest" description="Dehydratase (DH) domain" evidence="1 14">
    <location>
        <begin position="918"/>
        <end position="1187"/>
    </location>
</feature>
<feature type="region of interest" description="N-terminal hotdog fold" evidence="4">
    <location>
        <begin position="918"/>
        <end position="1038"/>
    </location>
</feature>
<feature type="region of interest" description="C-terminal hotdog fold" evidence="4">
    <location>
        <begin position="1050"/>
        <end position="1191"/>
    </location>
</feature>
<feature type="region of interest" description="Ketoreductase (KR) domain" evidence="1 14">
    <location>
        <begin position="1399"/>
        <end position="1587"/>
    </location>
</feature>
<feature type="region of interest" description="Disordered" evidence="6">
    <location>
        <begin position="1654"/>
        <end position="1680"/>
    </location>
</feature>
<feature type="active site" description="For beta-ketoacyl synthase activity" evidence="3">
    <location>
        <position position="190"/>
    </location>
</feature>
<feature type="active site" description="For beta-ketoacyl synthase activity" evidence="3">
    <location>
        <position position="325"/>
    </location>
</feature>
<feature type="active site" description="For beta-ketoacyl synthase activity" evidence="3">
    <location>
        <position position="367"/>
    </location>
</feature>
<feature type="active site" description="For malonyltransferase activity" evidence="5">
    <location>
        <position position="641"/>
    </location>
</feature>
<feature type="active site" description="Proton acceptor; for dehydratase activity" evidence="4">
    <location>
        <position position="950"/>
    </location>
</feature>
<feature type="active site" description="Proton donor; for dehydratase activity" evidence="4">
    <location>
        <position position="1113"/>
    </location>
</feature>
<feature type="modified residue" description="O-(pantetheine 4'-phosphoryl)serine" evidence="2">
    <location>
        <position position="1721"/>
    </location>
</feature>
<dbReference type="EC" id="2.3.1.165" evidence="7"/>
<dbReference type="EMBL" id="ADOT01000316">
    <property type="protein sequence ID" value="EGX43547.1"/>
    <property type="molecule type" value="Genomic_DNA"/>
</dbReference>
<dbReference type="RefSeq" id="XP_011127787.1">
    <property type="nucleotide sequence ID" value="XM_011129485.1"/>
</dbReference>
<dbReference type="SMR" id="G1XU04"/>
<dbReference type="STRING" id="756982.G1XU04"/>
<dbReference type="GeneID" id="22898694"/>
<dbReference type="eggNOG" id="KOG1202">
    <property type="taxonomic scope" value="Eukaryota"/>
</dbReference>
<dbReference type="HOGENOM" id="CLU_000022_35_3_1"/>
<dbReference type="InParanoid" id="G1XU04"/>
<dbReference type="OMA" id="SWVTHTT"/>
<dbReference type="OrthoDB" id="1880486at4890"/>
<dbReference type="UniPathway" id="UPA00213"/>
<dbReference type="PHI-base" id="PHI:5276"/>
<dbReference type="Proteomes" id="UP000008784">
    <property type="component" value="Unassembled WGS sequence"/>
</dbReference>
<dbReference type="GO" id="GO:0004315">
    <property type="term" value="F:3-oxoacyl-[acyl-carrier-protein] synthase activity"/>
    <property type="evidence" value="ECO:0007669"/>
    <property type="project" value="InterPro"/>
</dbReference>
<dbReference type="GO" id="GO:0050641">
    <property type="term" value="F:6-methylsalicylic acid synthase activity"/>
    <property type="evidence" value="ECO:0007669"/>
    <property type="project" value="UniProtKB-EC"/>
</dbReference>
<dbReference type="GO" id="GO:0004312">
    <property type="term" value="F:fatty acid synthase activity"/>
    <property type="evidence" value="ECO:0007669"/>
    <property type="project" value="TreeGrafter"/>
</dbReference>
<dbReference type="GO" id="GO:0016491">
    <property type="term" value="F:oxidoreductase activity"/>
    <property type="evidence" value="ECO:0007669"/>
    <property type="project" value="UniProtKB-KW"/>
</dbReference>
<dbReference type="GO" id="GO:0031177">
    <property type="term" value="F:phosphopantetheine binding"/>
    <property type="evidence" value="ECO:0007669"/>
    <property type="project" value="InterPro"/>
</dbReference>
<dbReference type="GO" id="GO:0006633">
    <property type="term" value="P:fatty acid biosynthetic process"/>
    <property type="evidence" value="ECO:0007669"/>
    <property type="project" value="InterPro"/>
</dbReference>
<dbReference type="GO" id="GO:0044550">
    <property type="term" value="P:secondary metabolite biosynthetic process"/>
    <property type="evidence" value="ECO:0007669"/>
    <property type="project" value="TreeGrafter"/>
</dbReference>
<dbReference type="GO" id="GO:0016114">
    <property type="term" value="P:terpenoid biosynthetic process"/>
    <property type="evidence" value="ECO:0007669"/>
    <property type="project" value="UniProtKB-UniPathway"/>
</dbReference>
<dbReference type="CDD" id="cd05274">
    <property type="entry name" value="KR_FAS_SDR_x"/>
    <property type="match status" value="1"/>
</dbReference>
<dbReference type="CDD" id="cd00833">
    <property type="entry name" value="PKS"/>
    <property type="match status" value="1"/>
</dbReference>
<dbReference type="Gene3D" id="3.30.70.3290">
    <property type="match status" value="1"/>
</dbReference>
<dbReference type="Gene3D" id="3.40.47.10">
    <property type="match status" value="1"/>
</dbReference>
<dbReference type="Gene3D" id="1.10.1200.10">
    <property type="entry name" value="ACP-like"/>
    <property type="match status" value="1"/>
</dbReference>
<dbReference type="Gene3D" id="3.40.366.10">
    <property type="entry name" value="Malonyl-Coenzyme A Acyl Carrier Protein, domain 2"/>
    <property type="match status" value="1"/>
</dbReference>
<dbReference type="Gene3D" id="3.40.50.720">
    <property type="entry name" value="NAD(P)-binding Rossmann-like Domain"/>
    <property type="match status" value="1"/>
</dbReference>
<dbReference type="Gene3D" id="3.10.129.110">
    <property type="entry name" value="Polyketide synthase dehydratase"/>
    <property type="match status" value="1"/>
</dbReference>
<dbReference type="InterPro" id="IPR001227">
    <property type="entry name" value="Ac_transferase_dom_sf"/>
</dbReference>
<dbReference type="InterPro" id="IPR036736">
    <property type="entry name" value="ACP-like_sf"/>
</dbReference>
<dbReference type="InterPro" id="IPR014043">
    <property type="entry name" value="Acyl_transferase_dom"/>
</dbReference>
<dbReference type="InterPro" id="IPR016035">
    <property type="entry name" value="Acyl_Trfase/lysoPLipase"/>
</dbReference>
<dbReference type="InterPro" id="IPR018201">
    <property type="entry name" value="Ketoacyl_synth_AS"/>
</dbReference>
<dbReference type="InterPro" id="IPR014031">
    <property type="entry name" value="Ketoacyl_synth_C"/>
</dbReference>
<dbReference type="InterPro" id="IPR014030">
    <property type="entry name" value="Ketoacyl_synth_N"/>
</dbReference>
<dbReference type="InterPro" id="IPR016036">
    <property type="entry name" value="Malonyl_transacylase_ACP-bd"/>
</dbReference>
<dbReference type="InterPro" id="IPR036291">
    <property type="entry name" value="NAD(P)-bd_dom_sf"/>
</dbReference>
<dbReference type="InterPro" id="IPR032821">
    <property type="entry name" value="PKS_assoc"/>
</dbReference>
<dbReference type="InterPro" id="IPR020841">
    <property type="entry name" value="PKS_Beta-ketoAc_synthase_dom"/>
</dbReference>
<dbReference type="InterPro" id="IPR042104">
    <property type="entry name" value="PKS_dehydratase_sf"/>
</dbReference>
<dbReference type="InterPro" id="IPR049552">
    <property type="entry name" value="PKS_DH_N"/>
</dbReference>
<dbReference type="InterPro" id="IPR013968">
    <property type="entry name" value="PKS_KR"/>
</dbReference>
<dbReference type="InterPro" id="IPR049900">
    <property type="entry name" value="PKS_mFAS_DH"/>
</dbReference>
<dbReference type="InterPro" id="IPR050091">
    <property type="entry name" value="PKS_NRPS_Biosynth_Enz"/>
</dbReference>
<dbReference type="InterPro" id="IPR020806">
    <property type="entry name" value="PKS_PP-bd"/>
</dbReference>
<dbReference type="InterPro" id="IPR009081">
    <property type="entry name" value="PP-bd_ACP"/>
</dbReference>
<dbReference type="InterPro" id="IPR016039">
    <property type="entry name" value="Thiolase-like"/>
</dbReference>
<dbReference type="PANTHER" id="PTHR43775">
    <property type="entry name" value="FATTY ACID SYNTHASE"/>
    <property type="match status" value="1"/>
</dbReference>
<dbReference type="PANTHER" id="PTHR43775:SF22">
    <property type="entry name" value="SYNTHASE, PUTATIVE (JCVI)-RELATED"/>
    <property type="match status" value="1"/>
</dbReference>
<dbReference type="Pfam" id="PF00698">
    <property type="entry name" value="Acyl_transf_1"/>
    <property type="match status" value="1"/>
</dbReference>
<dbReference type="Pfam" id="PF16197">
    <property type="entry name" value="KAsynt_C_assoc"/>
    <property type="match status" value="1"/>
</dbReference>
<dbReference type="Pfam" id="PF00109">
    <property type="entry name" value="ketoacyl-synt"/>
    <property type="match status" value="1"/>
</dbReference>
<dbReference type="Pfam" id="PF02801">
    <property type="entry name" value="Ketoacyl-synt_C"/>
    <property type="match status" value="1"/>
</dbReference>
<dbReference type="Pfam" id="PF08659">
    <property type="entry name" value="KR"/>
    <property type="match status" value="1"/>
</dbReference>
<dbReference type="Pfam" id="PF21089">
    <property type="entry name" value="PKS_DH_N"/>
    <property type="match status" value="1"/>
</dbReference>
<dbReference type="Pfam" id="PF00550">
    <property type="entry name" value="PP-binding"/>
    <property type="match status" value="1"/>
</dbReference>
<dbReference type="SMART" id="SM00827">
    <property type="entry name" value="PKS_AT"/>
    <property type="match status" value="1"/>
</dbReference>
<dbReference type="SMART" id="SM00822">
    <property type="entry name" value="PKS_KR"/>
    <property type="match status" value="1"/>
</dbReference>
<dbReference type="SMART" id="SM00825">
    <property type="entry name" value="PKS_KS"/>
    <property type="match status" value="1"/>
</dbReference>
<dbReference type="SMART" id="SM00823">
    <property type="entry name" value="PKS_PP"/>
    <property type="match status" value="1"/>
</dbReference>
<dbReference type="SMART" id="SM01294">
    <property type="entry name" value="PKS_PP_betabranch"/>
    <property type="match status" value="1"/>
</dbReference>
<dbReference type="SUPFAM" id="SSF47336">
    <property type="entry name" value="ACP-like"/>
    <property type="match status" value="1"/>
</dbReference>
<dbReference type="SUPFAM" id="SSF52151">
    <property type="entry name" value="FabD/lysophospholipase-like"/>
    <property type="match status" value="1"/>
</dbReference>
<dbReference type="SUPFAM" id="SSF51735">
    <property type="entry name" value="NAD(P)-binding Rossmann-fold domains"/>
    <property type="match status" value="2"/>
</dbReference>
<dbReference type="SUPFAM" id="SSF55048">
    <property type="entry name" value="Probable ACP-binding domain of malonyl-CoA ACP transacylase"/>
    <property type="match status" value="1"/>
</dbReference>
<dbReference type="SUPFAM" id="SSF53901">
    <property type="entry name" value="Thiolase-like"/>
    <property type="match status" value="1"/>
</dbReference>
<dbReference type="PROSITE" id="PS50075">
    <property type="entry name" value="CARRIER"/>
    <property type="match status" value="1"/>
</dbReference>
<dbReference type="PROSITE" id="PS00606">
    <property type="entry name" value="KS3_1"/>
    <property type="match status" value="1"/>
</dbReference>
<dbReference type="PROSITE" id="PS52004">
    <property type="entry name" value="KS3_2"/>
    <property type="match status" value="1"/>
</dbReference>
<dbReference type="PROSITE" id="PS52019">
    <property type="entry name" value="PKS_MFAS_DH"/>
    <property type="match status" value="1"/>
</dbReference>
<organism>
    <name type="scientific">Arthrobotrys oligospora (strain ATCC 24927 / CBS 115.81 / DSM 1491)</name>
    <name type="common">Nematode-trapping fungus</name>
    <name type="synonym">Didymozoophaga oligospora</name>
    <dbReference type="NCBI Taxonomy" id="756982"/>
    <lineage>
        <taxon>Eukaryota</taxon>
        <taxon>Fungi</taxon>
        <taxon>Dikarya</taxon>
        <taxon>Ascomycota</taxon>
        <taxon>Pezizomycotina</taxon>
        <taxon>Orbiliomycetes</taxon>
        <taxon>Orbiliales</taxon>
        <taxon>Orbiliaceae</taxon>
        <taxon>Orbilia</taxon>
        <taxon>Orbilia oligospora</taxon>
    </lineage>
</organism>
<evidence type="ECO:0000255" key="1"/>
<evidence type="ECO:0000255" key="2">
    <source>
        <dbReference type="PROSITE-ProRule" id="PRU00258"/>
    </source>
</evidence>
<evidence type="ECO:0000255" key="3">
    <source>
        <dbReference type="PROSITE-ProRule" id="PRU01348"/>
    </source>
</evidence>
<evidence type="ECO:0000255" key="4">
    <source>
        <dbReference type="PROSITE-ProRule" id="PRU01363"/>
    </source>
</evidence>
<evidence type="ECO:0000255" key="5">
    <source>
        <dbReference type="PROSITE-ProRule" id="PRU10022"/>
    </source>
</evidence>
<evidence type="ECO:0000256" key="6">
    <source>
        <dbReference type="SAM" id="MobiDB-lite"/>
    </source>
</evidence>
<evidence type="ECO:0000269" key="7">
    <source>
    </source>
</evidence>
<evidence type="ECO:0000269" key="8">
    <source>
    </source>
</evidence>
<evidence type="ECO:0000269" key="9">
    <source>
    </source>
</evidence>
<evidence type="ECO:0000269" key="10">
    <source>
    </source>
</evidence>
<evidence type="ECO:0000269" key="11">
    <source>
    </source>
</evidence>
<evidence type="ECO:0000303" key="12">
    <source>
    </source>
</evidence>
<evidence type="ECO:0000303" key="13">
    <source>
    </source>
</evidence>
<evidence type="ECO:0000305" key="14">
    <source>
    </source>
</evidence>
<evidence type="ECO:0000305" key="15">
    <source>
    </source>
</evidence>
<gene>
    <name type="ORF">AOL_s00215g283</name>
</gene>
<proteinExistence type="evidence at protein level"/>
<sequence>MTSTPATSLGDMDHEYNQDDIAIIGMACRLAGGIQSIEQFWNAILSKKDASGEIPEMRWEPYFRRDSRNAEILKKTTSRGYFLDRLENFDASFFGISPLEAELMDPQQRIALEVTWEALEHAGISVTSLAGSDTAVFMGVNSDDYSRLLLEDVPGVEAWMGIGTAFCGIPNRISYTLDLHGPSTAVDAACASGLVAVHHGRQALLAGESKLAIVGGVNALIGPGLTRVLDEAGAVTPEGRCRSFDDSASGYGRGEGASVLVLKRLSEAIIDGDKVLAVLKGSAVGQDGKTNGIMSPNQVAQEEVARKALSVARVDPLSVAFVEAHATSTPVGDPCEVAAIASVYGSGAGRPKDLPCKIGSVKPNVGHLEAGAGSTSLIKAVLAVSNGIFPPQANFQTPNRKMDWDNNSLEVIRGVSDWVQDRKRAGICSYGYGGTVAHAVIEQAPAPNFGPEDQVGDVVYADAAPYLLFWSAPQSQRLRETAAQLASWVGETEQPLADIANTLAYRRSQHQHRCAVVADNREEAVKLLELGSQNADSPWMIKEKVSNYGKKGAVWVFSGHGAHWTDMGKELLASEPAFYGAVSSIDNIVRDILNFSPLEALENGDLKTTDKQQVLTYAMQVGLSAVLRSKGAQPAAVIGHSVGEIAASVTAGCLTIQEGAFIVSQRAKLYRLVAGRGAMILVDLSPEDAVKELEEQGQTGAVAVAIHSSPNTCVLSGGIEAINELEQSLKDKHIQARRVKTDVAFHSPVLNELAEPLLELISGHIKPQQPKIRLYSTSLTQARGDNLRDEKYWIDNMIQPVLLTNAVKAALEDDFGIFLEVSSHPIIAHSINETIIEADSDGVIFPTLRRDKPSRKCILFALGKLHCHGAPIDLRANFSGDWTRDVPTTVWKHNPFWRKVGTGSLQPNKSVTHDVKSHVLLGAKHQVVGSDTTMWTTTLDESTRPFPGSHPLHGTEIVPAAVLLNTFLHTGEEYNALKDVILRVPVAMSAPRNIQIVKEQGRVRIVSRLQASEGENNNTESSWLTHTTGHVANNEWSKSSLDISATKKKLPSVKPSFATDYLASVGVPDMGFPWKVTEHYGEGDEMLSRVDTAPESSEKSIPWDVSSWAPILDAATSIGSSIFYKEPVLRMPAQIDEVAITPGSIPKVAYIHTTVETGMWRVNVAILNEEGHEVAHINGMRFSAVEGTPGASGSVESLVHQMSWPPAKLEEEGFQLKNVVFVSEQSDRVAAYIQDLQKRKVSTTVVPNPAGLEEQNLSSEGTIVAYLPSGSDLEEDTAKFSSTFCSEVLDIAKLLVNQKSPSKLWCITQGLFEAFSPSSLSQGPLVGLSRIIASEHPEVWGGLVDTDDESFPLQAVKYVKSVDVISVRDSVARVARLRPVPRSKIVTGREKTFTPTAEGTYLITGGLGALGLETAKWMVESGARRLILVSRRGLPPRRKWVDSNDDSAISTIRKLERLGASIHVVAADISKPDGAERLEQALDLLDLPSISGVVHAAGVLEDQLVAETTKESFDRVLAPKVSGAMALHQLFPPKTLEFFVLFSSCGQLLGFPGQASYASGNAFLDTFADFRRNQGDNIVSFLWTSWNGLGMASSTEYINAELEAKGITSVSRDEAFRAWEHAIKHDIHQAVVLRALPVEENGIPPLPILDEIAPRKRAESSGTEAVSKGEVSEKAPVPKSGPELKEYLQNAISECVAKTLRLPSAADVDPSTALTEMGMDSVMTVSLRKHLQTSLKVTVPPTLIWGHPTVNHLVKWFEEKI</sequence>
<name>AR283_ARTOA</name>